<sequence>MYLDPIAELITKINNGRKAHKAEVSFATSKLKTAILELLVKEGYIKSYDIRPTENNKSETVVKLKYKNQTTSSINGFKQISKPGLRIYSTHLNLPKVLNGLGIAIITTSKGVMSDKQARKENVGGEVIAYVW</sequence>
<protein>
    <recommendedName>
        <fullName evidence="1">Small ribosomal subunit protein uS8</fullName>
    </recommendedName>
    <alternativeName>
        <fullName evidence="2">30S ribosomal protein S8</fullName>
    </alternativeName>
</protein>
<feature type="chain" id="PRO_1000085951" description="Small ribosomal subunit protein uS8">
    <location>
        <begin position="1"/>
        <end position="132"/>
    </location>
</feature>
<comment type="function">
    <text evidence="1">One of the primary rRNA binding proteins, it binds directly to 16S rRNA central domain where it helps coordinate assembly of the platform of the 30S subunit.</text>
</comment>
<comment type="subunit">
    <text evidence="1">Part of the 30S ribosomal subunit. Contacts proteins S5 and S12.</text>
</comment>
<comment type="similarity">
    <text evidence="1">Belongs to the universal ribosomal protein uS8 family.</text>
</comment>
<proteinExistence type="inferred from homology"/>
<gene>
    <name evidence="1" type="primary">rpsH</name>
    <name type="ordered locus">UPA3_0253</name>
</gene>
<evidence type="ECO:0000255" key="1">
    <source>
        <dbReference type="HAMAP-Rule" id="MF_01302"/>
    </source>
</evidence>
<evidence type="ECO:0000305" key="2"/>
<organism>
    <name type="scientific">Ureaplasma parvum serovar 3 (strain ATCC 27815 / 27 / NCTC 11736)</name>
    <dbReference type="NCBI Taxonomy" id="505682"/>
    <lineage>
        <taxon>Bacteria</taxon>
        <taxon>Bacillati</taxon>
        <taxon>Mycoplasmatota</taxon>
        <taxon>Mycoplasmoidales</taxon>
        <taxon>Mycoplasmoidaceae</taxon>
        <taxon>Ureaplasma</taxon>
    </lineage>
</organism>
<name>RS8_UREP2</name>
<keyword id="KW-0687">Ribonucleoprotein</keyword>
<keyword id="KW-0689">Ribosomal protein</keyword>
<keyword id="KW-0694">RNA-binding</keyword>
<keyword id="KW-0699">rRNA-binding</keyword>
<reference key="1">
    <citation type="submission" date="2008-02" db="EMBL/GenBank/DDBJ databases">
        <title>Genome sequence of Ureaplasma parvum serovar 3.</title>
        <authorList>
            <person name="Methe B.A."/>
            <person name="Glass J."/>
            <person name="Waites K."/>
            <person name="Shrivastava S."/>
        </authorList>
    </citation>
    <scope>NUCLEOTIDE SEQUENCE [LARGE SCALE GENOMIC DNA]</scope>
    <source>
        <strain>ATCC 27815 / 27 / NCTC 11736</strain>
    </source>
</reference>
<dbReference type="EMBL" id="CP000942">
    <property type="protein sequence ID" value="ACA33250.1"/>
    <property type="molecule type" value="Genomic_DNA"/>
</dbReference>
<dbReference type="RefSeq" id="WP_004025683.1">
    <property type="nucleotide sequence ID" value="NC_010503.1"/>
</dbReference>
<dbReference type="SMR" id="B1AIN4"/>
<dbReference type="GeneID" id="93848720"/>
<dbReference type="KEGG" id="upa:UPA3_0253"/>
<dbReference type="HOGENOM" id="CLU_098428_0_2_14"/>
<dbReference type="Proteomes" id="UP000002162">
    <property type="component" value="Chromosome"/>
</dbReference>
<dbReference type="GO" id="GO:1990904">
    <property type="term" value="C:ribonucleoprotein complex"/>
    <property type="evidence" value="ECO:0007669"/>
    <property type="project" value="UniProtKB-KW"/>
</dbReference>
<dbReference type="GO" id="GO:0005840">
    <property type="term" value="C:ribosome"/>
    <property type="evidence" value="ECO:0007669"/>
    <property type="project" value="UniProtKB-KW"/>
</dbReference>
<dbReference type="GO" id="GO:0019843">
    <property type="term" value="F:rRNA binding"/>
    <property type="evidence" value="ECO:0007669"/>
    <property type="project" value="UniProtKB-UniRule"/>
</dbReference>
<dbReference type="GO" id="GO:0003735">
    <property type="term" value="F:structural constituent of ribosome"/>
    <property type="evidence" value="ECO:0007669"/>
    <property type="project" value="InterPro"/>
</dbReference>
<dbReference type="GO" id="GO:0006412">
    <property type="term" value="P:translation"/>
    <property type="evidence" value="ECO:0007669"/>
    <property type="project" value="UniProtKB-UniRule"/>
</dbReference>
<dbReference type="FunFam" id="3.30.1490.10:FF:000001">
    <property type="entry name" value="30S ribosomal protein S8"/>
    <property type="match status" value="1"/>
</dbReference>
<dbReference type="Gene3D" id="3.30.1370.30">
    <property type="match status" value="1"/>
</dbReference>
<dbReference type="Gene3D" id="3.30.1490.10">
    <property type="match status" value="1"/>
</dbReference>
<dbReference type="HAMAP" id="MF_01302_B">
    <property type="entry name" value="Ribosomal_uS8_B"/>
    <property type="match status" value="1"/>
</dbReference>
<dbReference type="InterPro" id="IPR000630">
    <property type="entry name" value="Ribosomal_uS8"/>
</dbReference>
<dbReference type="InterPro" id="IPR047863">
    <property type="entry name" value="Ribosomal_uS8_CS"/>
</dbReference>
<dbReference type="InterPro" id="IPR035987">
    <property type="entry name" value="Ribosomal_uS8_sf"/>
</dbReference>
<dbReference type="NCBIfam" id="NF001109">
    <property type="entry name" value="PRK00136.1"/>
    <property type="match status" value="1"/>
</dbReference>
<dbReference type="PANTHER" id="PTHR11758">
    <property type="entry name" value="40S RIBOSOMAL PROTEIN S15A"/>
    <property type="match status" value="1"/>
</dbReference>
<dbReference type="Pfam" id="PF00410">
    <property type="entry name" value="Ribosomal_S8"/>
    <property type="match status" value="1"/>
</dbReference>
<dbReference type="SUPFAM" id="SSF56047">
    <property type="entry name" value="Ribosomal protein S8"/>
    <property type="match status" value="1"/>
</dbReference>
<dbReference type="PROSITE" id="PS00053">
    <property type="entry name" value="RIBOSOMAL_S8"/>
    <property type="match status" value="1"/>
</dbReference>
<accession>B1AIN4</accession>